<gene>
    <name evidence="1" type="primary">trmD</name>
    <name type="ordered locus">stu1418</name>
</gene>
<protein>
    <recommendedName>
        <fullName evidence="1">tRNA (guanine-N(1)-)-methyltransferase</fullName>
        <ecNumber evidence="1">2.1.1.228</ecNumber>
    </recommendedName>
    <alternativeName>
        <fullName evidence="1">M1G-methyltransferase</fullName>
    </alternativeName>
    <alternativeName>
        <fullName evidence="1">tRNA [GM37] methyltransferase</fullName>
    </alternativeName>
</protein>
<keyword id="KW-0963">Cytoplasm</keyword>
<keyword id="KW-0489">Methyltransferase</keyword>
<keyword id="KW-1185">Reference proteome</keyword>
<keyword id="KW-0949">S-adenosyl-L-methionine</keyword>
<keyword id="KW-0808">Transferase</keyword>
<keyword id="KW-0819">tRNA processing</keyword>
<feature type="chain" id="PRO_0000060474" description="tRNA (guanine-N(1)-)-methyltransferase">
    <location>
        <begin position="1"/>
        <end position="239"/>
    </location>
</feature>
<feature type="binding site" evidence="1">
    <location>
        <position position="108"/>
    </location>
    <ligand>
        <name>S-adenosyl-L-methionine</name>
        <dbReference type="ChEBI" id="CHEBI:59789"/>
    </ligand>
</feature>
<feature type="binding site" evidence="1">
    <location>
        <begin position="127"/>
        <end position="132"/>
    </location>
    <ligand>
        <name>S-adenosyl-L-methionine</name>
        <dbReference type="ChEBI" id="CHEBI:59789"/>
    </ligand>
</feature>
<comment type="function">
    <text evidence="1">Specifically methylates guanosine-37 in various tRNAs.</text>
</comment>
<comment type="catalytic activity">
    <reaction evidence="1">
        <text>guanosine(37) in tRNA + S-adenosyl-L-methionine = N(1)-methylguanosine(37) in tRNA + S-adenosyl-L-homocysteine + H(+)</text>
        <dbReference type="Rhea" id="RHEA:36899"/>
        <dbReference type="Rhea" id="RHEA-COMP:10145"/>
        <dbReference type="Rhea" id="RHEA-COMP:10147"/>
        <dbReference type="ChEBI" id="CHEBI:15378"/>
        <dbReference type="ChEBI" id="CHEBI:57856"/>
        <dbReference type="ChEBI" id="CHEBI:59789"/>
        <dbReference type="ChEBI" id="CHEBI:73542"/>
        <dbReference type="ChEBI" id="CHEBI:74269"/>
        <dbReference type="EC" id="2.1.1.228"/>
    </reaction>
</comment>
<comment type="subunit">
    <text evidence="1">Homodimer.</text>
</comment>
<comment type="subcellular location">
    <subcellularLocation>
        <location evidence="1">Cytoplasm</location>
    </subcellularLocation>
</comment>
<comment type="similarity">
    <text evidence="1">Belongs to the RNA methyltransferase TrmD family.</text>
</comment>
<name>TRMD_STRT2</name>
<proteinExistence type="inferred from homology"/>
<sequence length="239" mass="27398">MKIDILTLFPDMFAPLEHSIVGKAKDKGILEINYHNFRDNAEKARHVDDEPYGGGQGMLLRAQPIFDTFDKLNVTKPRVILLDPAGRTFNQAYAEELAQEEELVFICGHYEGYDERIKTLVTDEISLGDFVLTGGELAAMTIVDATVRLIPEVLGKEASHKDDSFSSGLLEFPQYTRPAEFRGMKVPDVLLSGHHVNIRRWRMEQSLRKTWERRPDLLENYDFTDEERQILEEIKSEGK</sequence>
<organism>
    <name type="scientific">Streptococcus thermophilus (strain ATCC BAA-250 / LMG 18311)</name>
    <dbReference type="NCBI Taxonomy" id="264199"/>
    <lineage>
        <taxon>Bacteria</taxon>
        <taxon>Bacillati</taxon>
        <taxon>Bacillota</taxon>
        <taxon>Bacilli</taxon>
        <taxon>Lactobacillales</taxon>
        <taxon>Streptococcaceae</taxon>
        <taxon>Streptococcus</taxon>
    </lineage>
</organism>
<dbReference type="EC" id="2.1.1.228" evidence="1"/>
<dbReference type="EMBL" id="CP000023">
    <property type="protein sequence ID" value="AAV61031.1"/>
    <property type="molecule type" value="Genomic_DNA"/>
</dbReference>
<dbReference type="RefSeq" id="WP_011226285.1">
    <property type="nucleotide sequence ID" value="NC_006448.1"/>
</dbReference>
<dbReference type="SMR" id="Q5M3J5"/>
<dbReference type="STRING" id="264199.stu1418"/>
<dbReference type="KEGG" id="stl:stu1418"/>
<dbReference type="eggNOG" id="COG0336">
    <property type="taxonomic scope" value="Bacteria"/>
</dbReference>
<dbReference type="HOGENOM" id="CLU_047363_0_1_9"/>
<dbReference type="Proteomes" id="UP000001170">
    <property type="component" value="Chromosome"/>
</dbReference>
<dbReference type="GO" id="GO:0005829">
    <property type="term" value="C:cytosol"/>
    <property type="evidence" value="ECO:0007669"/>
    <property type="project" value="TreeGrafter"/>
</dbReference>
<dbReference type="GO" id="GO:0052906">
    <property type="term" value="F:tRNA (guanine(37)-N1)-methyltransferase activity"/>
    <property type="evidence" value="ECO:0007669"/>
    <property type="project" value="UniProtKB-UniRule"/>
</dbReference>
<dbReference type="GO" id="GO:0002939">
    <property type="term" value="P:tRNA N1-guanine methylation"/>
    <property type="evidence" value="ECO:0007669"/>
    <property type="project" value="TreeGrafter"/>
</dbReference>
<dbReference type="CDD" id="cd18080">
    <property type="entry name" value="TrmD-like"/>
    <property type="match status" value="1"/>
</dbReference>
<dbReference type="FunFam" id="1.10.1270.20:FF:000001">
    <property type="entry name" value="tRNA (guanine-N(1)-)-methyltransferase"/>
    <property type="match status" value="1"/>
</dbReference>
<dbReference type="FunFam" id="3.40.1280.10:FF:000001">
    <property type="entry name" value="tRNA (guanine-N(1)-)-methyltransferase"/>
    <property type="match status" value="1"/>
</dbReference>
<dbReference type="Gene3D" id="3.40.1280.10">
    <property type="match status" value="1"/>
</dbReference>
<dbReference type="Gene3D" id="1.10.1270.20">
    <property type="entry name" value="tRNA(m1g37)methyltransferase, domain 2"/>
    <property type="match status" value="1"/>
</dbReference>
<dbReference type="HAMAP" id="MF_00605">
    <property type="entry name" value="TrmD"/>
    <property type="match status" value="1"/>
</dbReference>
<dbReference type="InterPro" id="IPR029028">
    <property type="entry name" value="Alpha/beta_knot_MTases"/>
</dbReference>
<dbReference type="InterPro" id="IPR023148">
    <property type="entry name" value="tRNA_m1G_MeTrfase_C_sf"/>
</dbReference>
<dbReference type="InterPro" id="IPR002649">
    <property type="entry name" value="tRNA_m1G_MeTrfase_TrmD"/>
</dbReference>
<dbReference type="InterPro" id="IPR029026">
    <property type="entry name" value="tRNA_m1G_MTases_N"/>
</dbReference>
<dbReference type="InterPro" id="IPR016009">
    <property type="entry name" value="tRNA_MeTrfase_TRMD/TRM10"/>
</dbReference>
<dbReference type="NCBIfam" id="NF000648">
    <property type="entry name" value="PRK00026.1"/>
    <property type="match status" value="1"/>
</dbReference>
<dbReference type="NCBIfam" id="TIGR00088">
    <property type="entry name" value="trmD"/>
    <property type="match status" value="1"/>
</dbReference>
<dbReference type="PANTHER" id="PTHR46417">
    <property type="entry name" value="TRNA (GUANINE-N(1)-)-METHYLTRANSFERASE"/>
    <property type="match status" value="1"/>
</dbReference>
<dbReference type="PANTHER" id="PTHR46417:SF1">
    <property type="entry name" value="TRNA (GUANINE-N(1)-)-METHYLTRANSFERASE"/>
    <property type="match status" value="1"/>
</dbReference>
<dbReference type="Pfam" id="PF01746">
    <property type="entry name" value="tRNA_m1G_MT"/>
    <property type="match status" value="1"/>
</dbReference>
<dbReference type="PIRSF" id="PIRSF000386">
    <property type="entry name" value="tRNA_mtase"/>
    <property type="match status" value="1"/>
</dbReference>
<dbReference type="SUPFAM" id="SSF75217">
    <property type="entry name" value="alpha/beta knot"/>
    <property type="match status" value="1"/>
</dbReference>
<reference key="1">
    <citation type="journal article" date="2004" name="Nat. Biotechnol.">
        <title>Complete sequence and comparative genome analysis of the dairy bacterium Streptococcus thermophilus.</title>
        <authorList>
            <person name="Bolotin A."/>
            <person name="Quinquis B."/>
            <person name="Renault P."/>
            <person name="Sorokin A."/>
            <person name="Ehrlich S.D."/>
            <person name="Kulakauskas S."/>
            <person name="Lapidus A."/>
            <person name="Goltsman E."/>
            <person name="Mazur M."/>
            <person name="Pusch G.D."/>
            <person name="Fonstein M."/>
            <person name="Overbeek R."/>
            <person name="Kyprides N."/>
            <person name="Purnelle B."/>
            <person name="Prozzi D."/>
            <person name="Ngui K."/>
            <person name="Masuy D."/>
            <person name="Hancy F."/>
            <person name="Burteau S."/>
            <person name="Boutry M."/>
            <person name="Delcour J."/>
            <person name="Goffeau A."/>
            <person name="Hols P."/>
        </authorList>
    </citation>
    <scope>NUCLEOTIDE SEQUENCE [LARGE SCALE GENOMIC DNA]</scope>
    <source>
        <strain>ATCC BAA-250 / LMG 18311</strain>
    </source>
</reference>
<evidence type="ECO:0000255" key="1">
    <source>
        <dbReference type="HAMAP-Rule" id="MF_00605"/>
    </source>
</evidence>
<accession>Q5M3J5</accession>